<organism>
    <name type="scientific">Rattus norvegicus</name>
    <name type="common">Rat</name>
    <dbReference type="NCBI Taxonomy" id="10116"/>
    <lineage>
        <taxon>Eukaryota</taxon>
        <taxon>Metazoa</taxon>
        <taxon>Chordata</taxon>
        <taxon>Craniata</taxon>
        <taxon>Vertebrata</taxon>
        <taxon>Euteleostomi</taxon>
        <taxon>Mammalia</taxon>
        <taxon>Eutheria</taxon>
        <taxon>Euarchontoglires</taxon>
        <taxon>Glires</taxon>
        <taxon>Rodentia</taxon>
        <taxon>Myomorpha</taxon>
        <taxon>Muroidea</taxon>
        <taxon>Muridae</taxon>
        <taxon>Murinae</taxon>
        <taxon>Rattus</taxon>
    </lineage>
</organism>
<accession>P28077</accession>
<proteinExistence type="evidence at protein level"/>
<gene>
    <name type="primary">Psmb9</name>
    <name type="synonym">Lmp2</name>
    <name type="synonym">Ring12</name>
</gene>
<feature type="propeptide" id="PRO_0000026631" description="Removed in mature form" evidence="6">
    <location>
        <begin position="1"/>
        <end position="20"/>
    </location>
</feature>
<feature type="chain" id="PRO_0000026632" description="Proteasome subunit beta type-9">
    <location>
        <begin position="21"/>
        <end position="219"/>
    </location>
</feature>
<feature type="active site" description="Nucleophile" evidence="1">
    <location>
        <position position="21"/>
    </location>
</feature>
<feature type="site" description="Cleavage; by autolysis" evidence="2">
    <location>
        <begin position="20"/>
        <end position="21"/>
    </location>
</feature>
<feature type="modified residue" description="N6-acetyllysine" evidence="3">
    <location>
        <position position="53"/>
    </location>
</feature>
<feature type="modified residue" description="N6-acetyllysine" evidence="3">
    <location>
        <position position="109"/>
    </location>
</feature>
<protein>
    <recommendedName>
        <fullName>Proteasome subunit beta type-9</fullName>
        <ecNumber>3.4.25.1</ecNumber>
    </recommendedName>
    <alternativeName>
        <fullName>Low molecular mass protein 2</fullName>
    </alternativeName>
    <alternativeName>
        <fullName>Macropain chain 7</fullName>
    </alternativeName>
    <alternativeName>
        <fullName>Multicatalytic endopeptidase complex chain 7</fullName>
    </alternativeName>
    <alternativeName>
        <fullName>Proteasome chain 7</fullName>
    </alternativeName>
    <alternativeName>
        <fullName>Proteasome subunit beta-1i</fullName>
    </alternativeName>
    <alternativeName>
        <fullName>Really interesting new gene 12 protein</fullName>
    </alternativeName>
</protein>
<sequence>MLQAGAPTAGSFRTGEVHTGTTIMAVEFDGGVVVGSDSRVSAGAAVVNRVFDKLSPLHQRIYCALSGSAADAQAIADMAAYQLELHGLELEEPPLVLAAANIVKNISYKYREDLLAHLMVAGWDQHEGGQVYGTMGGMLIRQPFAIGGSGSTYIYGYVDAAYKPGMTPEECRRFTTDAITLAMNRDGSSGGVIYLVTITADGVDHRVILGDELPKFYDE</sequence>
<name>PSB9_RAT</name>
<comment type="function">
    <text>The proteasome is a multicatalytic proteinase complex which is characterized by its ability to cleave peptides with Arg, Phe, Tyr, Leu, and Glu adjacent to the leaving group at neutral or slightly basic pH. The proteasome has an ATP-dependent proteolytic activity. This subunit is involved in antigen processing to generate class I binding peptides.</text>
</comment>
<comment type="catalytic activity">
    <reaction>
        <text>Cleavage of peptide bonds with very broad specificity.</text>
        <dbReference type="EC" id="3.4.25.1"/>
    </reaction>
</comment>
<comment type="subunit">
    <text evidence="1">The 26S proteasome consists of a 20S proteasome core and two 19S regulatory subunits. The 20S proteasome core is composed of 28 subunits that are arranged in four stacked rings, resulting in a barrel-shaped structure. The two end rings are each formed by seven alpha subunits, and the two central rings are each formed by seven beta subunits. The catalytic chamber with the active sites is on the inside of the barrel. Component of the immunoproteasome, where it displaces the equivalent housekeeping subunit PSMB6. Component of the spermatoproteasome, a form of the proteasome specifically found in testis. Interacts with NCOA2 and NCOA3 (By similarity).</text>
</comment>
<comment type="subcellular location">
    <subcellularLocation>
        <location evidence="4">Cytoplasm</location>
    </subcellularLocation>
    <subcellularLocation>
        <location evidence="1">Nucleus</location>
    </subcellularLocation>
</comment>
<comment type="tissue specificity">
    <text evidence="5">Detected in the cytoplasmic lobe of elongated spermatids, in residual bodies, and in the acrosomal cap of round spermatids.</text>
</comment>
<comment type="induction">
    <text evidence="5">Up-regulated by interferon gamma (at protein level). Up-regulated by theophylline (THP), a reprotoxic agent thought to induce infertility.</text>
</comment>
<comment type="PTM">
    <text evidence="2">Autocleaved. The resulting N-terminal Thr residue of the mature subunit is responsible for the nucleophile proteolytic activity.</text>
</comment>
<comment type="similarity">
    <text evidence="4">Belongs to the peptidase T1B family.</text>
</comment>
<keyword id="KW-0007">Acetylation</keyword>
<keyword id="KW-0963">Cytoplasm</keyword>
<keyword id="KW-0903">Direct protein sequencing</keyword>
<keyword id="KW-0378">Hydrolase</keyword>
<keyword id="KW-0391">Immunity</keyword>
<keyword id="KW-0539">Nucleus</keyword>
<keyword id="KW-0645">Protease</keyword>
<keyword id="KW-0647">Proteasome</keyword>
<keyword id="KW-1185">Reference proteome</keyword>
<keyword id="KW-0888">Threonine protease</keyword>
<keyword id="KW-0865">Zymogen</keyword>
<reference key="1">
    <citation type="journal article" date="1992" name="J. Biochem.">
        <title>Molecular cloning of cDNAs for rat proteasomes: deduced primary structures of four other subunits.</title>
        <authorList>
            <person name="Tamura T."/>
            <person name="Shimbara N."/>
            <person name="Aki M."/>
            <person name="Ishida N."/>
            <person name="Bey F."/>
            <person name="Scherrer K."/>
            <person name="Tanaka K."/>
            <person name="Ichihara A."/>
        </authorList>
    </citation>
    <scope>NUCLEOTIDE SEQUENCE [MRNA]</scope>
</reference>
<reference key="2">
    <citation type="journal article" date="1990" name="FEBS Lett.">
        <title>N-terminal sequence similarities between components of the multicatalytic proteinase complex.</title>
        <authorList>
            <person name="Lilley K.S."/>
            <person name="Davison M.D."/>
            <person name="Rivett A.J."/>
        </authorList>
    </citation>
    <scope>PROTEIN SEQUENCE OF 21-41</scope>
</reference>
<reference key="3">
    <citation type="journal article" date="2007" name="Biol. Reprod.">
        <title>Differential expression of genes encoding constitutive and inducible 20S proteasomal core subunits in the testis and epididymis of theophylline- or 1,3-dinitrobenzene-exposed rats.</title>
        <authorList>
            <person name="Tengowski M.W."/>
            <person name="Feng D."/>
            <person name="Sutovsky M."/>
            <person name="Sutovsky P."/>
        </authorList>
    </citation>
    <scope>INDUCTION BY THP</scope>
    <scope>TISSUE SPECIFICITY</scope>
</reference>
<evidence type="ECO:0000250" key="1"/>
<evidence type="ECO:0000250" key="2">
    <source>
        <dbReference type="UniProtKB" id="O35955"/>
    </source>
</evidence>
<evidence type="ECO:0000250" key="3">
    <source>
        <dbReference type="UniProtKB" id="P28065"/>
    </source>
</evidence>
<evidence type="ECO:0000255" key="4">
    <source>
        <dbReference type="PROSITE-ProRule" id="PRU00809"/>
    </source>
</evidence>
<evidence type="ECO:0000269" key="5">
    <source>
    </source>
</evidence>
<evidence type="ECO:0000269" key="6">
    <source>
    </source>
</evidence>
<dbReference type="EC" id="3.4.25.1"/>
<dbReference type="EMBL" id="D10757">
    <property type="protein sequence ID" value="BAA01589.1"/>
    <property type="molecule type" value="mRNA"/>
</dbReference>
<dbReference type="PIR" id="JX0231">
    <property type="entry name" value="JX0231"/>
</dbReference>
<dbReference type="PIR" id="S09088">
    <property type="entry name" value="S09088"/>
</dbReference>
<dbReference type="RefSeq" id="NP_036840.2">
    <property type="nucleotide sequence ID" value="NM_012708.2"/>
</dbReference>
<dbReference type="SMR" id="P28077"/>
<dbReference type="FunCoup" id="P28077">
    <property type="interactions" value="1076"/>
</dbReference>
<dbReference type="STRING" id="10116.ENSRNOP00000000532"/>
<dbReference type="MEROPS" id="T01.013"/>
<dbReference type="GlyGen" id="P28077">
    <property type="glycosylation" value="1 site"/>
</dbReference>
<dbReference type="iPTMnet" id="P28077"/>
<dbReference type="PhosphoSitePlus" id="P28077"/>
<dbReference type="jPOST" id="P28077"/>
<dbReference type="PaxDb" id="10116-ENSRNOP00000000532"/>
<dbReference type="GeneID" id="24967"/>
<dbReference type="KEGG" id="rno:24967"/>
<dbReference type="UCSC" id="RGD:3427">
    <property type="organism name" value="rat"/>
</dbReference>
<dbReference type="AGR" id="RGD:3427"/>
<dbReference type="CTD" id="5698"/>
<dbReference type="RGD" id="3427">
    <property type="gene designation" value="Psmb9"/>
</dbReference>
<dbReference type="eggNOG" id="KOG0174">
    <property type="taxonomic scope" value="Eukaryota"/>
</dbReference>
<dbReference type="InParanoid" id="P28077"/>
<dbReference type="OrthoDB" id="84680at9989"/>
<dbReference type="PhylomeDB" id="P28077"/>
<dbReference type="Reactome" id="R-RNO-9907900">
    <property type="pathway name" value="Proteasome assembly"/>
</dbReference>
<dbReference type="PRO" id="PR:P28077"/>
<dbReference type="Proteomes" id="UP000002494">
    <property type="component" value="Unplaced"/>
</dbReference>
<dbReference type="GO" id="GO:0005829">
    <property type="term" value="C:cytosol"/>
    <property type="evidence" value="ECO:0000318"/>
    <property type="project" value="GO_Central"/>
</dbReference>
<dbReference type="GO" id="GO:0005634">
    <property type="term" value="C:nucleus"/>
    <property type="evidence" value="ECO:0000318"/>
    <property type="project" value="GO_Central"/>
</dbReference>
<dbReference type="GO" id="GO:0000502">
    <property type="term" value="C:proteasome complex"/>
    <property type="evidence" value="ECO:0000314"/>
    <property type="project" value="RGD"/>
</dbReference>
<dbReference type="GO" id="GO:0005839">
    <property type="term" value="C:proteasome core complex"/>
    <property type="evidence" value="ECO:0000266"/>
    <property type="project" value="RGD"/>
</dbReference>
<dbReference type="GO" id="GO:0019774">
    <property type="term" value="C:proteasome core complex, beta-subunit complex"/>
    <property type="evidence" value="ECO:0000250"/>
    <property type="project" value="UniProtKB"/>
</dbReference>
<dbReference type="GO" id="GO:1990111">
    <property type="term" value="C:spermatoproteasome complex"/>
    <property type="evidence" value="ECO:0000250"/>
    <property type="project" value="UniProtKB"/>
</dbReference>
<dbReference type="GO" id="GO:0004175">
    <property type="term" value="F:endopeptidase activity"/>
    <property type="evidence" value="ECO:0000318"/>
    <property type="project" value="GO_Central"/>
</dbReference>
<dbReference type="GO" id="GO:0070628">
    <property type="term" value="F:proteasome binding"/>
    <property type="evidence" value="ECO:0000314"/>
    <property type="project" value="RGD"/>
</dbReference>
<dbReference type="GO" id="GO:0004298">
    <property type="term" value="F:threonine-type endopeptidase activity"/>
    <property type="evidence" value="ECO:0007669"/>
    <property type="project" value="UniProtKB-KW"/>
</dbReference>
<dbReference type="GO" id="GO:0019882">
    <property type="term" value="P:antigen processing and presentation"/>
    <property type="evidence" value="ECO:0000266"/>
    <property type="project" value="RGD"/>
</dbReference>
<dbReference type="GO" id="GO:0071257">
    <property type="term" value="P:cellular response to electrical stimulus"/>
    <property type="evidence" value="ECO:0000270"/>
    <property type="project" value="RGD"/>
</dbReference>
<dbReference type="GO" id="GO:0071347">
    <property type="term" value="P:cellular response to interleukin-1"/>
    <property type="evidence" value="ECO:0000270"/>
    <property type="project" value="RGD"/>
</dbReference>
<dbReference type="GO" id="GO:0098586">
    <property type="term" value="P:cellular response to virus"/>
    <property type="evidence" value="ECO:0000270"/>
    <property type="project" value="RGD"/>
</dbReference>
<dbReference type="GO" id="GO:0001889">
    <property type="term" value="P:liver development"/>
    <property type="evidence" value="ECO:0000270"/>
    <property type="project" value="RGD"/>
</dbReference>
<dbReference type="GO" id="GO:0014889">
    <property type="term" value="P:muscle atrophy"/>
    <property type="evidence" value="ECO:0000270"/>
    <property type="project" value="RGD"/>
</dbReference>
<dbReference type="GO" id="GO:0043161">
    <property type="term" value="P:proteasome-mediated ubiquitin-dependent protein catabolic process"/>
    <property type="evidence" value="ECO:0000266"/>
    <property type="project" value="RGD"/>
</dbReference>
<dbReference type="GO" id="GO:0043279">
    <property type="term" value="P:response to alkaloid"/>
    <property type="evidence" value="ECO:0000270"/>
    <property type="project" value="RGD"/>
</dbReference>
<dbReference type="GO" id="GO:0009617">
    <property type="term" value="P:response to bacterium"/>
    <property type="evidence" value="ECO:0000266"/>
    <property type="project" value="RGD"/>
</dbReference>
<dbReference type="GO" id="GO:0009410">
    <property type="term" value="P:response to xenobiotic stimulus"/>
    <property type="evidence" value="ECO:0000270"/>
    <property type="project" value="RGD"/>
</dbReference>
<dbReference type="GO" id="GO:0048536">
    <property type="term" value="P:spleen development"/>
    <property type="evidence" value="ECO:0000270"/>
    <property type="project" value="RGD"/>
</dbReference>
<dbReference type="GO" id="GO:0048538">
    <property type="term" value="P:thymus development"/>
    <property type="evidence" value="ECO:0000270"/>
    <property type="project" value="RGD"/>
</dbReference>
<dbReference type="CDD" id="cd03762">
    <property type="entry name" value="proteasome_beta_type_6"/>
    <property type="match status" value="1"/>
</dbReference>
<dbReference type="FunFam" id="3.60.20.10:FF:000010">
    <property type="entry name" value="Proteasome subunit beta type-1"/>
    <property type="match status" value="1"/>
</dbReference>
<dbReference type="Gene3D" id="3.60.20.10">
    <property type="entry name" value="Glutamine Phosphoribosylpyrophosphate, subunit 1, domain 1"/>
    <property type="match status" value="1"/>
</dbReference>
<dbReference type="InterPro" id="IPR029055">
    <property type="entry name" value="Ntn_hydrolases_N"/>
</dbReference>
<dbReference type="InterPro" id="IPR000243">
    <property type="entry name" value="Pept_T1A_subB"/>
</dbReference>
<dbReference type="InterPro" id="IPR016050">
    <property type="entry name" value="Proteasome_bsu_CS"/>
</dbReference>
<dbReference type="InterPro" id="IPR001353">
    <property type="entry name" value="Proteasome_sua/b"/>
</dbReference>
<dbReference type="InterPro" id="IPR023333">
    <property type="entry name" value="Proteasome_suB-type"/>
</dbReference>
<dbReference type="PANTHER" id="PTHR32194">
    <property type="entry name" value="METALLOPROTEASE TLDD"/>
    <property type="match status" value="1"/>
</dbReference>
<dbReference type="PANTHER" id="PTHR32194:SF12">
    <property type="entry name" value="PROTEASOME SUBUNIT BETA"/>
    <property type="match status" value="1"/>
</dbReference>
<dbReference type="Pfam" id="PF00227">
    <property type="entry name" value="Proteasome"/>
    <property type="match status" value="1"/>
</dbReference>
<dbReference type="PRINTS" id="PR00141">
    <property type="entry name" value="PROTEASOME"/>
</dbReference>
<dbReference type="SUPFAM" id="SSF56235">
    <property type="entry name" value="N-terminal nucleophile aminohydrolases (Ntn hydrolases)"/>
    <property type="match status" value="1"/>
</dbReference>
<dbReference type="PROSITE" id="PS00854">
    <property type="entry name" value="PROTEASOME_BETA_1"/>
    <property type="match status" value="1"/>
</dbReference>
<dbReference type="PROSITE" id="PS51476">
    <property type="entry name" value="PROTEASOME_BETA_2"/>
    <property type="match status" value="1"/>
</dbReference>